<protein>
    <recommendedName>
        <fullName>Density-regulated protein homolog</fullName>
    </recommendedName>
</protein>
<reference key="1">
    <citation type="journal article" date="2005" name="Nature">
        <title>The genome of the social amoeba Dictyostelium discoideum.</title>
        <authorList>
            <person name="Eichinger L."/>
            <person name="Pachebat J.A."/>
            <person name="Gloeckner G."/>
            <person name="Rajandream M.A."/>
            <person name="Sucgang R."/>
            <person name="Berriman M."/>
            <person name="Song J."/>
            <person name="Olsen R."/>
            <person name="Szafranski K."/>
            <person name="Xu Q."/>
            <person name="Tunggal B."/>
            <person name="Kummerfeld S."/>
            <person name="Madera M."/>
            <person name="Konfortov B.A."/>
            <person name="Rivero F."/>
            <person name="Bankier A.T."/>
            <person name="Lehmann R."/>
            <person name="Hamlin N."/>
            <person name="Davies R."/>
            <person name="Gaudet P."/>
            <person name="Fey P."/>
            <person name="Pilcher K."/>
            <person name="Chen G."/>
            <person name="Saunders D."/>
            <person name="Sodergren E.J."/>
            <person name="Davis P."/>
            <person name="Kerhornou A."/>
            <person name="Nie X."/>
            <person name="Hall N."/>
            <person name="Anjard C."/>
            <person name="Hemphill L."/>
            <person name="Bason N."/>
            <person name="Farbrother P."/>
            <person name="Desany B."/>
            <person name="Just E."/>
            <person name="Morio T."/>
            <person name="Rost R."/>
            <person name="Churcher C.M."/>
            <person name="Cooper J."/>
            <person name="Haydock S."/>
            <person name="van Driessche N."/>
            <person name="Cronin A."/>
            <person name="Goodhead I."/>
            <person name="Muzny D.M."/>
            <person name="Mourier T."/>
            <person name="Pain A."/>
            <person name="Lu M."/>
            <person name="Harper D."/>
            <person name="Lindsay R."/>
            <person name="Hauser H."/>
            <person name="James K.D."/>
            <person name="Quiles M."/>
            <person name="Madan Babu M."/>
            <person name="Saito T."/>
            <person name="Buchrieser C."/>
            <person name="Wardroper A."/>
            <person name="Felder M."/>
            <person name="Thangavelu M."/>
            <person name="Johnson D."/>
            <person name="Knights A."/>
            <person name="Loulseged H."/>
            <person name="Mungall K.L."/>
            <person name="Oliver K."/>
            <person name="Price C."/>
            <person name="Quail M.A."/>
            <person name="Urushihara H."/>
            <person name="Hernandez J."/>
            <person name="Rabbinowitsch E."/>
            <person name="Steffen D."/>
            <person name="Sanders M."/>
            <person name="Ma J."/>
            <person name="Kohara Y."/>
            <person name="Sharp S."/>
            <person name="Simmonds M.N."/>
            <person name="Spiegler S."/>
            <person name="Tivey A."/>
            <person name="Sugano S."/>
            <person name="White B."/>
            <person name="Walker D."/>
            <person name="Woodward J.R."/>
            <person name="Winckler T."/>
            <person name="Tanaka Y."/>
            <person name="Shaulsky G."/>
            <person name="Schleicher M."/>
            <person name="Weinstock G.M."/>
            <person name="Rosenthal A."/>
            <person name="Cox E.C."/>
            <person name="Chisholm R.L."/>
            <person name="Gibbs R.A."/>
            <person name="Loomis W.F."/>
            <person name="Platzer M."/>
            <person name="Kay R.R."/>
            <person name="Williams J.G."/>
            <person name="Dear P.H."/>
            <person name="Noegel A.A."/>
            <person name="Barrell B.G."/>
            <person name="Kuspa A."/>
        </authorList>
    </citation>
    <scope>NUCLEOTIDE SEQUENCE [LARGE SCALE GENOMIC DNA]</scope>
    <source>
        <strain>AX4</strain>
    </source>
</reference>
<keyword id="KW-1185">Reference proteome</keyword>
<accession>Q54WG0</accession>
<evidence type="ECO:0000255" key="1">
    <source>
        <dbReference type="PROSITE-ProRule" id="PRU00200"/>
    </source>
</evidence>
<evidence type="ECO:0000256" key="2">
    <source>
        <dbReference type="SAM" id="MobiDB-lite"/>
    </source>
</evidence>
<evidence type="ECO:0000305" key="3"/>
<sequence length="224" mass="24747">MSDTESSTPSQPIVVVEYCKICSLPTEYCEYGPSAKQCLKENGPHPNNNKNTASGKDSSNTTATTTTTDTTTTTTTSTENTEEKLKDLKIVDDSKEVSHVDAGKSESKEATGEEKEKEKVSKKKKEVKPQIIIEVNQRNKRKHVTKITGLELYGIKLSDAAKVMAKKFSCGCSVVKSISNPNSEDIDIQGDFGEELVDLIEEKYPTVPLSEIYFLEDKKKVKAR</sequence>
<comment type="similarity">
    <text evidence="3">Belongs to the DENR family.</text>
</comment>
<gene>
    <name type="primary">denr</name>
    <name type="ORF">DDB_G0279677</name>
</gene>
<proteinExistence type="inferred from homology"/>
<name>DENR_DICDI</name>
<dbReference type="EMBL" id="AAFI02000032">
    <property type="protein sequence ID" value="EAL67613.1"/>
    <property type="molecule type" value="Genomic_DNA"/>
</dbReference>
<dbReference type="RefSeq" id="XP_641593.1">
    <property type="nucleotide sequence ID" value="XM_636501.1"/>
</dbReference>
<dbReference type="SMR" id="Q54WG0"/>
<dbReference type="FunCoup" id="Q54WG0">
    <property type="interactions" value="407"/>
</dbReference>
<dbReference type="STRING" id="44689.Q54WG0"/>
<dbReference type="PaxDb" id="44689-DDB0266779"/>
<dbReference type="EnsemblProtists" id="EAL67613">
    <property type="protein sequence ID" value="EAL67613"/>
    <property type="gene ID" value="DDB_G0279677"/>
</dbReference>
<dbReference type="GeneID" id="8622167"/>
<dbReference type="KEGG" id="ddi:DDB_G0279677"/>
<dbReference type="dictyBase" id="DDB_G0279677">
    <property type="gene designation" value="denr"/>
</dbReference>
<dbReference type="VEuPathDB" id="AmoebaDB:DDB_G0279677"/>
<dbReference type="eggNOG" id="KOG3239">
    <property type="taxonomic scope" value="Eukaryota"/>
</dbReference>
<dbReference type="HOGENOM" id="CLU_073511_0_1_1"/>
<dbReference type="InParanoid" id="Q54WG0"/>
<dbReference type="OMA" id="EVFEIDM"/>
<dbReference type="PhylomeDB" id="Q54WG0"/>
<dbReference type="PRO" id="PR:Q54WG0"/>
<dbReference type="Proteomes" id="UP000002195">
    <property type="component" value="Chromosome 3"/>
</dbReference>
<dbReference type="GO" id="GO:0003743">
    <property type="term" value="F:translation initiation factor activity"/>
    <property type="evidence" value="ECO:0007669"/>
    <property type="project" value="InterPro"/>
</dbReference>
<dbReference type="GO" id="GO:0001731">
    <property type="term" value="P:formation of translation preinitiation complex"/>
    <property type="evidence" value="ECO:0000318"/>
    <property type="project" value="GO_Central"/>
</dbReference>
<dbReference type="GO" id="GO:0002188">
    <property type="term" value="P:translation reinitiation"/>
    <property type="evidence" value="ECO:0000318"/>
    <property type="project" value="GO_Central"/>
</dbReference>
<dbReference type="CDD" id="cd11607">
    <property type="entry name" value="DENR_C"/>
    <property type="match status" value="1"/>
</dbReference>
<dbReference type="Gene3D" id="3.30.780.10">
    <property type="entry name" value="SUI1-like domain"/>
    <property type="match status" value="1"/>
</dbReference>
<dbReference type="InterPro" id="IPR050318">
    <property type="entry name" value="DENR/SUI1_TIF"/>
</dbReference>
<dbReference type="InterPro" id="IPR046447">
    <property type="entry name" value="DENR_C"/>
</dbReference>
<dbReference type="InterPro" id="IPR048517">
    <property type="entry name" value="DENR_N"/>
</dbReference>
<dbReference type="InterPro" id="IPR001950">
    <property type="entry name" value="SUI1"/>
</dbReference>
<dbReference type="InterPro" id="IPR036877">
    <property type="entry name" value="SUI1_dom_sf"/>
</dbReference>
<dbReference type="PANTHER" id="PTHR12789:SF0">
    <property type="entry name" value="DENSITY-REGULATED PROTEIN"/>
    <property type="match status" value="1"/>
</dbReference>
<dbReference type="PANTHER" id="PTHR12789">
    <property type="entry name" value="DENSITY-REGULATED PROTEIN HOMOLOG"/>
    <property type="match status" value="1"/>
</dbReference>
<dbReference type="Pfam" id="PF21023">
    <property type="entry name" value="DENR_N"/>
    <property type="match status" value="1"/>
</dbReference>
<dbReference type="Pfam" id="PF01253">
    <property type="entry name" value="SUI1"/>
    <property type="match status" value="1"/>
</dbReference>
<dbReference type="SUPFAM" id="SSF55159">
    <property type="entry name" value="eIF1-like"/>
    <property type="match status" value="1"/>
</dbReference>
<dbReference type="PROSITE" id="PS50296">
    <property type="entry name" value="SUI1"/>
    <property type="match status" value="1"/>
</dbReference>
<feature type="chain" id="PRO_0000322641" description="Density-regulated protein homolog">
    <location>
        <begin position="1"/>
        <end position="224"/>
    </location>
</feature>
<feature type="domain" description="SUI1" evidence="1">
    <location>
        <begin position="131"/>
        <end position="204"/>
    </location>
</feature>
<feature type="region of interest" description="Disordered" evidence="2">
    <location>
        <begin position="35"/>
        <end position="124"/>
    </location>
</feature>
<feature type="compositionally biased region" description="Polar residues" evidence="2">
    <location>
        <begin position="45"/>
        <end position="56"/>
    </location>
</feature>
<feature type="compositionally biased region" description="Low complexity" evidence="2">
    <location>
        <begin position="57"/>
        <end position="79"/>
    </location>
</feature>
<feature type="compositionally biased region" description="Basic and acidic residues" evidence="2">
    <location>
        <begin position="81"/>
        <end position="119"/>
    </location>
</feature>
<organism>
    <name type="scientific">Dictyostelium discoideum</name>
    <name type="common">Social amoeba</name>
    <dbReference type="NCBI Taxonomy" id="44689"/>
    <lineage>
        <taxon>Eukaryota</taxon>
        <taxon>Amoebozoa</taxon>
        <taxon>Evosea</taxon>
        <taxon>Eumycetozoa</taxon>
        <taxon>Dictyostelia</taxon>
        <taxon>Dictyosteliales</taxon>
        <taxon>Dictyosteliaceae</taxon>
        <taxon>Dictyostelium</taxon>
    </lineage>
</organism>